<gene>
    <name type="ORF">WSV222</name>
</gene>
<feature type="chain" id="PRO_0000410892" description="RING finger containing E3 ubiquitin-protein ligase WSV222">
    <location>
        <begin position="1"/>
        <end position="844"/>
    </location>
</feature>
<feature type="zinc finger region" description="RING-type; atypical" evidence="2">
    <location>
        <begin position="308"/>
        <end position="359"/>
    </location>
</feature>
<feature type="binding site" evidence="1">
    <location>
        <begin position="229"/>
        <end position="236"/>
    </location>
    <ligand>
        <name>ATP</name>
        <dbReference type="ChEBI" id="CHEBI:30616"/>
    </ligand>
</feature>
<reference key="1">
    <citation type="journal article" date="2001" name="J. Virol.">
        <title>Complete genome sequence of the shrimp white spot bacilliform virus.</title>
        <authorList>
            <person name="Yang F."/>
            <person name="He J."/>
            <person name="Lin X."/>
            <person name="Li Q."/>
            <person name="Pan D."/>
            <person name="Zhang X."/>
            <person name="Xu X."/>
        </authorList>
    </citation>
    <scope>NUCLEOTIDE SEQUENCE [GENOMIC DNA]</scope>
</reference>
<reference key="2">
    <citation type="journal article" date="2006" name="J. Virol.">
        <title>White spot syndrome virus open reading frame 222 encodes a viral E3 ligase and mediates degradation of a host tumor suppressor via ubiquitination.</title>
        <authorList>
            <person name="He F."/>
            <person name="Fenner B.J."/>
            <person name="Godwin A.K."/>
            <person name="Kwang J."/>
        </authorList>
    </citation>
    <scope>FUNCTION</scope>
    <scope>CATALYTIC ACTIVITY</scope>
    <scope>INTERACTION WITH HOST UBE2E1/UBCH6</scope>
    <scope>INTERACTION WITH SHRIMP TUMOR SUPPRESSOR-LIKE PROTEIN</scope>
</reference>
<reference key="3">
    <citation type="journal article" date="2009" name="J. Gen. Virol.">
        <title>Viral ubiquitin ligase WSSV222 is required for efficient white spot syndrome virus replication in shrimp.</title>
        <authorList>
            <person name="He F."/>
            <person name="Syed S.M."/>
            <person name="Hameed A.S."/>
            <person name="Kwang J."/>
        </authorList>
    </citation>
    <scope>DISRUPTION PHENOTYPE</scope>
</reference>
<organism>
    <name type="scientific">White spot syndrome virus (isolate Shrimp/China/Tongan/1996)</name>
    <name type="common">WSSV</name>
    <name type="synonym">White spot bacilliform virus</name>
    <dbReference type="NCBI Taxonomy" id="654913"/>
    <lineage>
        <taxon>Viruses</taxon>
        <taxon>Viruses incertae sedis</taxon>
        <taxon>Naldaviricetes</taxon>
        <taxon>Nimaviridae</taxon>
        <taxon>Whispovirus</taxon>
        <taxon>White spot syndrome virus</taxon>
    </lineage>
</organism>
<evidence type="ECO:0000255" key="1"/>
<evidence type="ECO:0000255" key="2">
    <source>
        <dbReference type="PROSITE-ProRule" id="PRU00175"/>
    </source>
</evidence>
<evidence type="ECO:0000269" key="3">
    <source>
    </source>
</evidence>
<evidence type="ECO:0000269" key="4">
    <source>
    </source>
</evidence>
<proteinExistence type="evidence at protein level"/>
<keyword id="KW-0067">ATP-binding</keyword>
<keyword id="KW-0945">Host-virus interaction</keyword>
<keyword id="KW-0479">Metal-binding</keyword>
<keyword id="KW-1128">Modulation of host ubiquitin pathway by viral E3 ligase</keyword>
<keyword id="KW-1130">Modulation of host ubiquitin pathway by virus</keyword>
<keyword id="KW-0547">Nucleotide-binding</keyword>
<keyword id="KW-1185">Reference proteome</keyword>
<keyword id="KW-0808">Transferase</keyword>
<keyword id="KW-0833">Ubl conjugation pathway</keyword>
<keyword id="KW-0862">Zinc</keyword>
<keyword id="KW-0863">Zinc-finger</keyword>
<protein>
    <recommendedName>
        <fullName>RING finger containing E3 ubiquitin-protein ligase WSV222</fullName>
        <ecNumber evidence="3">2.3.2.27</ecNumber>
    </recommendedName>
    <alternativeName>
        <fullName>RING-type E3 ubiquitin transferase WSV222</fullName>
    </alternativeName>
</protein>
<accession>Q77J49</accession>
<name>UB222_WSSVS</name>
<dbReference type="EC" id="2.3.2.27" evidence="3"/>
<dbReference type="EMBL" id="AF332093">
    <property type="protein sequence ID" value="AAL33226.1"/>
    <property type="molecule type" value="Genomic_DNA"/>
</dbReference>
<dbReference type="SMR" id="Q77J49"/>
<dbReference type="UniPathway" id="UPA00143"/>
<dbReference type="Proteomes" id="UP000000327">
    <property type="component" value="Segment"/>
</dbReference>
<dbReference type="GO" id="GO:0005524">
    <property type="term" value="F:ATP binding"/>
    <property type="evidence" value="ECO:0007669"/>
    <property type="project" value="UniProtKB-KW"/>
</dbReference>
<dbReference type="GO" id="GO:0016740">
    <property type="term" value="F:transferase activity"/>
    <property type="evidence" value="ECO:0007669"/>
    <property type="project" value="UniProtKB-KW"/>
</dbReference>
<dbReference type="GO" id="GO:0008270">
    <property type="term" value="F:zinc ion binding"/>
    <property type="evidence" value="ECO:0007669"/>
    <property type="project" value="UniProtKB-KW"/>
</dbReference>
<dbReference type="GO" id="GO:0016567">
    <property type="term" value="P:protein ubiquitination"/>
    <property type="evidence" value="ECO:0007669"/>
    <property type="project" value="UniProtKB-UniPathway"/>
</dbReference>
<dbReference type="GO" id="GO:0039648">
    <property type="term" value="P:symbiont-mediated perturbation of host ubiquitin-like protein modification"/>
    <property type="evidence" value="ECO:0007669"/>
    <property type="project" value="UniProtKB-KW"/>
</dbReference>
<dbReference type="Gene3D" id="3.30.40.10">
    <property type="entry name" value="Zinc/RING finger domain, C3HC4 (zinc finger)"/>
    <property type="match status" value="1"/>
</dbReference>
<dbReference type="InterPro" id="IPR001841">
    <property type="entry name" value="Znf_RING"/>
</dbReference>
<dbReference type="InterPro" id="IPR013083">
    <property type="entry name" value="Znf_RING/FYVE/PHD"/>
</dbReference>
<dbReference type="SUPFAM" id="SSF57850">
    <property type="entry name" value="RING/U-box"/>
    <property type="match status" value="1"/>
</dbReference>
<dbReference type="PROSITE" id="PS50089">
    <property type="entry name" value="ZF_RING_2"/>
    <property type="match status" value="1"/>
</dbReference>
<comment type="function">
    <text evidence="3">Probable E3 ubiquitin-protein ligase which accepts ubiquitin from the E2 ubiquitin-conjugating enzyme UBE2E1/UBCH6 in the form of a thioester and then directly transfers the ubiquitin to targeted substrates. Mediates ubiquitination of host tumor-suppressor-like protein (TSL) targeting it for degradation. Might function as an anti-apoptosis protein by counteracting TSL-induced apoptosis.</text>
</comment>
<comment type="catalytic activity">
    <reaction evidence="3">
        <text>S-ubiquitinyl-[E2 ubiquitin-conjugating enzyme]-L-cysteine + [acceptor protein]-L-lysine = [E2 ubiquitin-conjugating enzyme]-L-cysteine + N(6)-ubiquitinyl-[acceptor protein]-L-lysine.</text>
        <dbReference type="EC" id="2.3.2.27"/>
    </reaction>
</comment>
<comment type="pathway">
    <text>Protein modification; protein ubiquitination.</text>
</comment>
<comment type="subunit">
    <text evidence="3">Interacts with host UBE2E1/UBCH6 (Probable); this interaction results in WSV222 auto-ubiquitination. Interacts with host tumor suppressor-like protein.</text>
</comment>
<comment type="disruption phenotype">
    <text evidence="4">Reduction of host mortality.</text>
</comment>
<sequence length="844" mass="97040">MFTHLTRAFRKMNNLVNRSFIDVHRVVAELSYPEFEEDVKNPESSIYRTPISLFQNKDIVTIVGDYILSPKTDSFQVLYPIKKVIEHFPVIFHCTHNNAPLWVHLLDERHHRLLQSLLTYEIVNAKYRGIVVIPYYRRPINYQTGKSLLMSKLASVKVLDILMRCGSYKFISLMCMINKKNNTNFLHCCASKWGEVGSKMMLHIAEMFFANPTTSQHLSDASSFPDAAAEDDKGKTPAHLAIQEDNADALLFLISLYGAPWFQDNNSYMKSALELKSNKCVKVLSFAADKYEILPNINNNQLEPDTMCGVCATSVEEDENEGKTTSLSWYQMNCKHYIHCECLMGMCAAAGNVQCPMCREDVGDEVLERCPPTIFRWLKLAERSEHNRVLFEAKKQEFYKQMEAMKPPRVVVPPRRTFLTPARRGERAIRIAREIATNAIAEATAQGDVNSYFPVLIDGSGEEYEEEGEEFFNSEEEALAFGRPFLEDEEEARQIQMRQFAELSRRGVSVNIINNDNPHRHISTVNIVQPVYGVEKSPAASFIYNMLKNDVFESIRSRDTRVGGERVPVMNLSNDKRALFHAASSMLCDFATETNSQIVGLDFQAVYDPHHISNYIETFGSPLHAYPGAVTFLDGAQDYYAESIRYDNDIVSFSEMASELHITEALDVFEGSLLSPLFKKIRTGKSYSNWNDHLRRRNYARDIAEEFVRVCENSLASREHPPVHVHPFRDGAIPILIEYIVDFIHHCITWSMQVNALHCMRKYIEHENTNVHLLNLRPTDERVEVLRVSQLRWSRLFNEQYNTRMSLSTKRLSLMKIFNHDLGVSKFGVYKLLDIIEMYCFTLI</sequence>
<organismHost>
    <name type="scientific">Crustacea</name>
    <dbReference type="NCBI Taxonomy" id="6657"/>
</organismHost>